<keyword id="KW-0878">Amphibian defense peptide</keyword>
<keyword id="KW-0044">Antibiotic</keyword>
<keyword id="KW-0929">Antimicrobial</keyword>
<keyword id="KW-0165">Cleavage on pair of basic residues</keyword>
<keyword id="KW-0204">Cytolysis</keyword>
<keyword id="KW-0903">Direct protein sequencing</keyword>
<keyword id="KW-1015">Disulfide bond</keyword>
<keyword id="KW-0295">Fungicide</keyword>
<keyword id="KW-0354">Hemolysis</keyword>
<keyword id="KW-0391">Immunity</keyword>
<keyword id="KW-0399">Innate immunity</keyword>
<keyword id="KW-0964">Secreted</keyword>
<keyword id="KW-0732">Signal</keyword>
<reference key="1">
    <citation type="journal article" date="2006" name="Peptides">
        <title>Two families of antimicrobial peptides with multiple functions from skin of rufous-spotted torrent frog, Amolops loloensis.</title>
        <authorList>
            <person name="Lu Y."/>
            <person name="Li J."/>
            <person name="Yu H."/>
            <person name="Xu X."/>
            <person name="Liang J."/>
            <person name="Tian Y."/>
            <person name="Ma D."/>
            <person name="Lin G."/>
            <person name="Huang G."/>
            <person name="Lai R."/>
        </authorList>
    </citation>
    <scope>NUCLEOTIDE SEQUENCE [MRNA]</scope>
    <scope>PROTEIN SEQUENCE OF 47-70</scope>
    <scope>SUBCELLULAR LOCATION</scope>
    <scope>MASS SPECTROMETRY</scope>
    <source>
        <tissue>Skin</tissue>
        <tissue>Skin secretion</tissue>
    </source>
</reference>
<reference key="2">
    <citation type="journal article" date="2010" name="Comp. Biochem. Physiol.">
        <title>Five novel antimicrobial peptides from skin secretions of the frog, Amolops loloensis.</title>
        <authorList>
            <person name="Wang M."/>
            <person name="Wang Y."/>
            <person name="Wang A."/>
            <person name="Song Y."/>
            <person name="Ma D."/>
            <person name="Yang H."/>
            <person name="Ma Y."/>
            <person name="Lai R."/>
        </authorList>
    </citation>
    <scope>NOMENCLATURE</scope>
</reference>
<feature type="signal peptide" evidence="2">
    <location>
        <begin position="1"/>
        <end position="22"/>
    </location>
</feature>
<feature type="propeptide" id="PRO_0000450014" evidence="7">
    <location>
        <begin position="23"/>
        <end position="46"/>
    </location>
</feature>
<feature type="peptide" id="PRO_5007633307" description="Brevinins-ALa" evidence="3">
    <location>
        <begin position="47"/>
        <end position="70"/>
    </location>
</feature>
<feature type="disulfide bond" evidence="1">
    <location>
        <begin position="64"/>
        <end position="70"/>
    </location>
</feature>
<organism>
    <name type="scientific">Amolops loloensis</name>
    <name type="common">Lolokou Sucker Frog</name>
    <name type="synonym">Staurois loloensis</name>
    <dbReference type="NCBI Taxonomy" id="318551"/>
    <lineage>
        <taxon>Eukaryota</taxon>
        <taxon>Metazoa</taxon>
        <taxon>Chordata</taxon>
        <taxon>Craniata</taxon>
        <taxon>Vertebrata</taxon>
        <taxon>Euteleostomi</taxon>
        <taxon>Amphibia</taxon>
        <taxon>Batrachia</taxon>
        <taxon>Anura</taxon>
        <taxon>Neobatrachia</taxon>
        <taxon>Ranoidea</taxon>
        <taxon>Ranidae</taxon>
        <taxon>Amolops</taxon>
    </lineage>
</organism>
<accession>A0SN38</accession>
<proteinExistence type="evidence at protein level"/>
<dbReference type="EMBL" id="DQ673109">
    <property type="protein sequence ID" value="ABG72906.1"/>
    <property type="molecule type" value="mRNA"/>
</dbReference>
<dbReference type="EMBL" id="DQ673111">
    <property type="protein sequence ID" value="ABG72908.1"/>
    <property type="molecule type" value="mRNA"/>
</dbReference>
<dbReference type="TCDB" id="1.C.52.1.26">
    <property type="family name" value="the dermaseptin (dermaseptin) family"/>
</dbReference>
<dbReference type="GO" id="GO:0005576">
    <property type="term" value="C:extracellular region"/>
    <property type="evidence" value="ECO:0007669"/>
    <property type="project" value="UniProtKB-SubCell"/>
</dbReference>
<dbReference type="GO" id="GO:0042742">
    <property type="term" value="P:defense response to bacterium"/>
    <property type="evidence" value="ECO:0007669"/>
    <property type="project" value="UniProtKB-KW"/>
</dbReference>
<dbReference type="GO" id="GO:0050832">
    <property type="term" value="P:defense response to fungus"/>
    <property type="evidence" value="ECO:0007669"/>
    <property type="project" value="UniProtKB-KW"/>
</dbReference>
<dbReference type="GO" id="GO:0045087">
    <property type="term" value="P:innate immune response"/>
    <property type="evidence" value="ECO:0007669"/>
    <property type="project" value="UniProtKB-KW"/>
</dbReference>
<dbReference type="GO" id="GO:0031640">
    <property type="term" value="P:killing of cells of another organism"/>
    <property type="evidence" value="ECO:0007669"/>
    <property type="project" value="UniProtKB-KW"/>
</dbReference>
<dbReference type="InterPro" id="IPR012520">
    <property type="entry name" value="Antimicrobial_frog_1"/>
</dbReference>
<dbReference type="InterPro" id="IPR004275">
    <property type="entry name" value="Frog_antimicrobial_propeptide"/>
</dbReference>
<dbReference type="Pfam" id="PF08018">
    <property type="entry name" value="Antimicrobial_1"/>
    <property type="match status" value="1"/>
</dbReference>
<dbReference type="Pfam" id="PF03032">
    <property type="entry name" value="FSAP_sig_propep"/>
    <property type="match status" value="1"/>
</dbReference>
<evidence type="ECO:0000250" key="1">
    <source>
        <dbReference type="UniProtKB" id="E1B240"/>
    </source>
</evidence>
<evidence type="ECO:0000255" key="2"/>
<evidence type="ECO:0000269" key="3">
    <source>
    </source>
</evidence>
<evidence type="ECO:0000303" key="4">
    <source>
    </source>
</evidence>
<evidence type="ECO:0000303" key="5">
    <source>
    </source>
</evidence>
<evidence type="ECO:0000305" key="6"/>
<evidence type="ECO:0000305" key="7">
    <source>
    </source>
</evidence>
<evidence type="ECO:0000312" key="8">
    <source>
        <dbReference type="EMBL" id="ABG72906.1"/>
    </source>
</evidence>
<sequence length="70" mass="8189">MFTLKKSMLLLFFLGTINLSLCEQERNADEEERRDDDEMDVEVEKRFLPMLAGLAANFLPKLFCKITKKC</sequence>
<protein>
    <recommendedName>
        <fullName evidence="4">Brevinins-ALa</fullName>
    </recommendedName>
    <alternativeName>
        <fullName evidence="8">Amolopin-1a</fullName>
    </alternativeName>
    <alternativeName>
        <fullName evidence="5">Brevinins-1E-AL1</fullName>
    </alternativeName>
</protein>
<comment type="function">
    <text evidence="1">Antimicrobial peptide with activity against a variety of Gram-negative and Gram-positive bacteria and against fungi (By similarity). Shows strong hemolytic activity against human erythrocytes (By similarity).</text>
</comment>
<comment type="subcellular location">
    <subcellularLocation>
        <location evidence="3">Secreted</location>
    </subcellularLocation>
</comment>
<comment type="tissue specificity">
    <text evidence="7">Expressed by the skin glands.</text>
</comment>
<comment type="mass spectrometry" mass="2665.3" method="FAB" evidence="3"/>
<comment type="miscellaneous">
    <text evidence="6">The primary structure of this peptide is identical to that of Brevinin-1MT2 (AC E1B241).</text>
</comment>
<comment type="similarity">
    <text evidence="6">Belongs to the frog skin active peptide (FSAP) family. Brevinin subfamily.</text>
</comment>
<comment type="online information" name="The antimicrobial peptide database">
    <link uri="https://wangapd3.com/database/query_output.php?ID=00860"/>
</comment>
<name>BRA_AMOLO</name>